<protein>
    <recommendedName>
        <fullName evidence="1">DNA-directed RNA polymerase subunit beta'</fullName>
        <shortName evidence="1">RNAP subunit beta'</shortName>
        <ecNumber evidence="1">2.7.7.6</ecNumber>
    </recommendedName>
    <alternativeName>
        <fullName evidence="1">RNA polymerase subunit beta'</fullName>
    </alternativeName>
    <alternativeName>
        <fullName evidence="1">Transcriptase subunit beta'</fullName>
    </alternativeName>
</protein>
<name>RPOC_HAEIG</name>
<proteinExistence type="inferred from homology"/>
<gene>
    <name evidence="1" type="primary">rpoC</name>
    <name type="ordered locus">CGSHiGG_05820</name>
</gene>
<reference key="1">
    <citation type="journal article" date="2007" name="Genome Biol.">
        <title>Characterization and modeling of the Haemophilus influenzae core and supragenomes based on the complete genomic sequences of Rd and 12 clinical nontypeable strains.</title>
        <authorList>
            <person name="Hogg J.S."/>
            <person name="Hu F.Z."/>
            <person name="Janto B."/>
            <person name="Boissy R."/>
            <person name="Hayes J."/>
            <person name="Keefe R."/>
            <person name="Post J.C."/>
            <person name="Ehrlich G.D."/>
        </authorList>
    </citation>
    <scope>NUCLEOTIDE SEQUENCE [LARGE SCALE GENOMIC DNA]</scope>
    <source>
        <strain>PittGG</strain>
    </source>
</reference>
<comment type="function">
    <text evidence="1">DNA-dependent RNA polymerase catalyzes the transcription of DNA into RNA using the four ribonucleoside triphosphates as substrates.</text>
</comment>
<comment type="catalytic activity">
    <reaction evidence="1">
        <text>RNA(n) + a ribonucleoside 5'-triphosphate = RNA(n+1) + diphosphate</text>
        <dbReference type="Rhea" id="RHEA:21248"/>
        <dbReference type="Rhea" id="RHEA-COMP:14527"/>
        <dbReference type="Rhea" id="RHEA-COMP:17342"/>
        <dbReference type="ChEBI" id="CHEBI:33019"/>
        <dbReference type="ChEBI" id="CHEBI:61557"/>
        <dbReference type="ChEBI" id="CHEBI:140395"/>
        <dbReference type="EC" id="2.7.7.6"/>
    </reaction>
</comment>
<comment type="cofactor">
    <cofactor evidence="1">
        <name>Mg(2+)</name>
        <dbReference type="ChEBI" id="CHEBI:18420"/>
    </cofactor>
    <text evidence="1">Binds 1 Mg(2+) ion per subunit.</text>
</comment>
<comment type="cofactor">
    <cofactor evidence="1">
        <name>Zn(2+)</name>
        <dbReference type="ChEBI" id="CHEBI:29105"/>
    </cofactor>
    <text evidence="1">Binds 2 Zn(2+) ions per subunit.</text>
</comment>
<comment type="subunit">
    <text evidence="1">The RNAP catalytic core consists of 2 alpha, 1 beta, 1 beta' and 1 omega subunit. When a sigma factor is associated with the core the holoenzyme is formed, which can initiate transcription.</text>
</comment>
<comment type="similarity">
    <text evidence="1">Belongs to the RNA polymerase beta' chain family.</text>
</comment>
<sequence length="1416" mass="157233">MKDLVKFLKAQSKTSEDFDVIKIGLASPDMIRSWSFGEVKKPETINYRTFKPERDGLFCARIFGPVKDYECLCGKYKRLKHRGVICEKCGVEVTQTKVRRERMGHIELASPVAHIWFLKSLPSRIGLLLDMPLRDIERVLYFEMYIVTEPGMTDLERGQLLTEEQYLDAEDRWQDEFEAKMGAEAIQDLLKGMDLEAECEKLREELQETNSETKRKKITKRLKLLEAFVQSGNKPEWMVMTVLPVLPPDLRPLVPLDGGRFATSDLNDLYRRVINRNNRLKRLLDLIAPDIIVRNEKRMLQESVDALLDNGRRGRAITGSNRRPLKSLADMIKGKQGRFRQNLLGKRVDYSGRSVITVGPYLHLHQCGLPKKMALELFRPFIYAKLESRGYATTIKAAKKMVEREDAIVWDILAEVIREHPILLNRAPTLHRLGIQAFEPILIEGKAIQLHPLVCAAFNADFDGDQMAVHVPLTLEAQLEARALMMSTNNVLSPANGDPIIVPSQDVVLGLYYMTREKVNGKGEGMLLQDPREAEKAYRTGEAELHSRVKVRITEYVKNEAGEFDAKTTLTDTTIGRAILWMIAPKGMPYSLFNQTLGKKAISKLINEAYRRLGLKEAVMFADQIMYTGFAYAARSGSSVGIDDMEIPAKKYEIISAAEEEVAEIQEQFQSGLVTAGERYNKVIDIWAAANERVAKAMMENLSQEEVINREGNPEKQASFNSIFMMADSGARGSAAQIRQLAGMRGLMARPDGSIIETPITANFREGLNVLQYFISTHGARKGLADTALKTANSGYLTRRLVDVAQDLVIVEDDCGTHEGLVMTPLIEGGDEKVPLRELVLGRVAAEDILKPGTEEVLIPRNTLLDEKLCDVLDANSVDSVKVRSVVTCDTDFGVCAKCYGRDLARGHLINQGEAVGVIAAQSIGEPGTQLTMRTFHIGGAASAAAKESSVQVKNTGTVHLMNAKFVTNDESKLVLTSRNTELTITDAFGRTKEHYKVPYGAVLSKGDGQEVTAGETIANWDPHTMPVVSEVSGFVKFVDIIDGLTVTRQTDELTGLSSIVVQDVGERATAGKDLRPTIKLVDANGNDIFLPETDVLAQYFLPGKAIVSLDDGAAVKVGEPLARIPQESVGTKDITGGLPRVADLFEARKPKEPAILAEISGIVSFGKETKGKRRLLITPAEGETYEEMIPKWRQLNVFEGEMVQRGDVISDGAETPHDILRLRGVRAVTEYIVNEVQDVYRLQGVKINDKHIEVIVRQMLRKAVITKAYDSEFLEGEQVEVARVKIVNRQREAEGKPPVEFERELLGITKASLATESFISAASFQETTRVLTEAAVAGKRDELRGLKENVIVGRLIPAGTGFAYHQNRHKHRLVDDVVAKLSEEDEAAIADEFVMTADDASANLAEMLNMADDAE</sequence>
<keyword id="KW-0240">DNA-directed RNA polymerase</keyword>
<keyword id="KW-0460">Magnesium</keyword>
<keyword id="KW-0479">Metal-binding</keyword>
<keyword id="KW-0548">Nucleotidyltransferase</keyword>
<keyword id="KW-0804">Transcription</keyword>
<keyword id="KW-0808">Transferase</keyword>
<keyword id="KW-0862">Zinc</keyword>
<evidence type="ECO:0000255" key="1">
    <source>
        <dbReference type="HAMAP-Rule" id="MF_01322"/>
    </source>
</evidence>
<feature type="chain" id="PRO_0000353378" description="DNA-directed RNA polymerase subunit beta'">
    <location>
        <begin position="1"/>
        <end position="1416"/>
    </location>
</feature>
<feature type="binding site" evidence="1">
    <location>
        <position position="71"/>
    </location>
    <ligand>
        <name>Zn(2+)</name>
        <dbReference type="ChEBI" id="CHEBI:29105"/>
        <label>1</label>
    </ligand>
</feature>
<feature type="binding site" evidence="1">
    <location>
        <position position="73"/>
    </location>
    <ligand>
        <name>Zn(2+)</name>
        <dbReference type="ChEBI" id="CHEBI:29105"/>
        <label>1</label>
    </ligand>
</feature>
<feature type="binding site" evidence="1">
    <location>
        <position position="86"/>
    </location>
    <ligand>
        <name>Zn(2+)</name>
        <dbReference type="ChEBI" id="CHEBI:29105"/>
        <label>1</label>
    </ligand>
</feature>
<feature type="binding site" evidence="1">
    <location>
        <position position="89"/>
    </location>
    <ligand>
        <name>Zn(2+)</name>
        <dbReference type="ChEBI" id="CHEBI:29105"/>
        <label>1</label>
    </ligand>
</feature>
<feature type="binding site" evidence="1">
    <location>
        <position position="461"/>
    </location>
    <ligand>
        <name>Mg(2+)</name>
        <dbReference type="ChEBI" id="CHEBI:18420"/>
    </ligand>
</feature>
<feature type="binding site" evidence="1">
    <location>
        <position position="463"/>
    </location>
    <ligand>
        <name>Mg(2+)</name>
        <dbReference type="ChEBI" id="CHEBI:18420"/>
    </ligand>
</feature>
<feature type="binding site" evidence="1">
    <location>
        <position position="465"/>
    </location>
    <ligand>
        <name>Mg(2+)</name>
        <dbReference type="ChEBI" id="CHEBI:18420"/>
    </ligand>
</feature>
<feature type="binding site" evidence="1">
    <location>
        <position position="815"/>
    </location>
    <ligand>
        <name>Zn(2+)</name>
        <dbReference type="ChEBI" id="CHEBI:29105"/>
        <label>2</label>
    </ligand>
</feature>
<feature type="binding site" evidence="1">
    <location>
        <position position="889"/>
    </location>
    <ligand>
        <name>Zn(2+)</name>
        <dbReference type="ChEBI" id="CHEBI:29105"/>
        <label>2</label>
    </ligand>
</feature>
<feature type="binding site" evidence="1">
    <location>
        <position position="896"/>
    </location>
    <ligand>
        <name>Zn(2+)</name>
        <dbReference type="ChEBI" id="CHEBI:29105"/>
        <label>2</label>
    </ligand>
</feature>
<feature type="binding site" evidence="1">
    <location>
        <position position="899"/>
    </location>
    <ligand>
        <name>Zn(2+)</name>
        <dbReference type="ChEBI" id="CHEBI:29105"/>
        <label>2</label>
    </ligand>
</feature>
<dbReference type="EC" id="2.7.7.6" evidence="1"/>
<dbReference type="EMBL" id="CP000672">
    <property type="protein sequence ID" value="ABR00075.1"/>
    <property type="molecule type" value="Genomic_DNA"/>
</dbReference>
<dbReference type="SMR" id="A5UH19"/>
<dbReference type="KEGG" id="hiq:CGSHiGG_05820"/>
<dbReference type="HOGENOM" id="CLU_000524_3_1_6"/>
<dbReference type="Proteomes" id="UP000001990">
    <property type="component" value="Chromosome"/>
</dbReference>
<dbReference type="GO" id="GO:0000428">
    <property type="term" value="C:DNA-directed RNA polymerase complex"/>
    <property type="evidence" value="ECO:0007669"/>
    <property type="project" value="UniProtKB-KW"/>
</dbReference>
<dbReference type="GO" id="GO:0003677">
    <property type="term" value="F:DNA binding"/>
    <property type="evidence" value="ECO:0007669"/>
    <property type="project" value="UniProtKB-UniRule"/>
</dbReference>
<dbReference type="GO" id="GO:0003899">
    <property type="term" value="F:DNA-directed RNA polymerase activity"/>
    <property type="evidence" value="ECO:0007669"/>
    <property type="project" value="UniProtKB-UniRule"/>
</dbReference>
<dbReference type="GO" id="GO:0000287">
    <property type="term" value="F:magnesium ion binding"/>
    <property type="evidence" value="ECO:0007669"/>
    <property type="project" value="UniProtKB-UniRule"/>
</dbReference>
<dbReference type="GO" id="GO:0008270">
    <property type="term" value="F:zinc ion binding"/>
    <property type="evidence" value="ECO:0007669"/>
    <property type="project" value="UniProtKB-UniRule"/>
</dbReference>
<dbReference type="GO" id="GO:0006351">
    <property type="term" value="P:DNA-templated transcription"/>
    <property type="evidence" value="ECO:0007669"/>
    <property type="project" value="UniProtKB-UniRule"/>
</dbReference>
<dbReference type="CDD" id="cd02655">
    <property type="entry name" value="RNAP_beta'_C"/>
    <property type="match status" value="1"/>
</dbReference>
<dbReference type="CDD" id="cd01609">
    <property type="entry name" value="RNAP_beta'_N"/>
    <property type="match status" value="1"/>
</dbReference>
<dbReference type="FunFam" id="1.10.132.30:FF:000003">
    <property type="entry name" value="DNA-directed RNA polymerase subunit beta"/>
    <property type="match status" value="1"/>
</dbReference>
<dbReference type="FunFam" id="1.10.150.390:FF:000002">
    <property type="entry name" value="DNA-directed RNA polymerase subunit beta"/>
    <property type="match status" value="1"/>
</dbReference>
<dbReference type="FunFam" id="1.10.40.90:FF:000001">
    <property type="entry name" value="DNA-directed RNA polymerase subunit beta"/>
    <property type="match status" value="1"/>
</dbReference>
<dbReference type="FunFam" id="4.10.860.120:FF:000001">
    <property type="entry name" value="DNA-directed RNA polymerase subunit beta"/>
    <property type="match status" value="1"/>
</dbReference>
<dbReference type="Gene3D" id="1.10.132.30">
    <property type="match status" value="1"/>
</dbReference>
<dbReference type="Gene3D" id="1.10.150.390">
    <property type="match status" value="1"/>
</dbReference>
<dbReference type="Gene3D" id="1.10.1790.20">
    <property type="match status" value="1"/>
</dbReference>
<dbReference type="Gene3D" id="1.10.40.90">
    <property type="match status" value="1"/>
</dbReference>
<dbReference type="Gene3D" id="2.40.40.20">
    <property type="match status" value="1"/>
</dbReference>
<dbReference type="Gene3D" id="2.40.50.100">
    <property type="match status" value="3"/>
</dbReference>
<dbReference type="Gene3D" id="4.10.860.120">
    <property type="entry name" value="RNA polymerase II, clamp domain"/>
    <property type="match status" value="1"/>
</dbReference>
<dbReference type="Gene3D" id="1.10.274.100">
    <property type="entry name" value="RNA polymerase Rpb1, domain 3"/>
    <property type="match status" value="1"/>
</dbReference>
<dbReference type="HAMAP" id="MF_01322">
    <property type="entry name" value="RNApol_bact_RpoC"/>
    <property type="match status" value="1"/>
</dbReference>
<dbReference type="InterPro" id="IPR045867">
    <property type="entry name" value="DNA-dir_RpoC_beta_prime"/>
</dbReference>
<dbReference type="InterPro" id="IPR012754">
    <property type="entry name" value="DNA-dir_RpoC_beta_prime_bact"/>
</dbReference>
<dbReference type="InterPro" id="IPR000722">
    <property type="entry name" value="RNA_pol_asu"/>
</dbReference>
<dbReference type="InterPro" id="IPR006592">
    <property type="entry name" value="RNA_pol_N"/>
</dbReference>
<dbReference type="InterPro" id="IPR007080">
    <property type="entry name" value="RNA_pol_Rpb1_1"/>
</dbReference>
<dbReference type="InterPro" id="IPR007066">
    <property type="entry name" value="RNA_pol_Rpb1_3"/>
</dbReference>
<dbReference type="InterPro" id="IPR042102">
    <property type="entry name" value="RNA_pol_Rpb1_3_sf"/>
</dbReference>
<dbReference type="InterPro" id="IPR007083">
    <property type="entry name" value="RNA_pol_Rpb1_4"/>
</dbReference>
<dbReference type="InterPro" id="IPR007081">
    <property type="entry name" value="RNA_pol_Rpb1_5"/>
</dbReference>
<dbReference type="InterPro" id="IPR044893">
    <property type="entry name" value="RNA_pol_Rpb1_clamp_domain"/>
</dbReference>
<dbReference type="InterPro" id="IPR038120">
    <property type="entry name" value="Rpb1_funnel_sf"/>
</dbReference>
<dbReference type="NCBIfam" id="TIGR02386">
    <property type="entry name" value="rpoC_TIGR"/>
    <property type="match status" value="1"/>
</dbReference>
<dbReference type="PANTHER" id="PTHR19376">
    <property type="entry name" value="DNA-DIRECTED RNA POLYMERASE"/>
    <property type="match status" value="1"/>
</dbReference>
<dbReference type="PANTHER" id="PTHR19376:SF54">
    <property type="entry name" value="DNA-DIRECTED RNA POLYMERASE SUBUNIT BETA"/>
    <property type="match status" value="1"/>
</dbReference>
<dbReference type="Pfam" id="PF04997">
    <property type="entry name" value="RNA_pol_Rpb1_1"/>
    <property type="match status" value="1"/>
</dbReference>
<dbReference type="Pfam" id="PF00623">
    <property type="entry name" value="RNA_pol_Rpb1_2"/>
    <property type="match status" value="2"/>
</dbReference>
<dbReference type="Pfam" id="PF04983">
    <property type="entry name" value="RNA_pol_Rpb1_3"/>
    <property type="match status" value="1"/>
</dbReference>
<dbReference type="Pfam" id="PF05000">
    <property type="entry name" value="RNA_pol_Rpb1_4"/>
    <property type="match status" value="1"/>
</dbReference>
<dbReference type="Pfam" id="PF04998">
    <property type="entry name" value="RNA_pol_Rpb1_5"/>
    <property type="match status" value="1"/>
</dbReference>
<dbReference type="SMART" id="SM00663">
    <property type="entry name" value="RPOLA_N"/>
    <property type="match status" value="1"/>
</dbReference>
<dbReference type="SUPFAM" id="SSF64484">
    <property type="entry name" value="beta and beta-prime subunits of DNA dependent RNA-polymerase"/>
    <property type="match status" value="1"/>
</dbReference>
<organism>
    <name type="scientific">Haemophilus influenzae (strain PittGG)</name>
    <dbReference type="NCBI Taxonomy" id="374931"/>
    <lineage>
        <taxon>Bacteria</taxon>
        <taxon>Pseudomonadati</taxon>
        <taxon>Pseudomonadota</taxon>
        <taxon>Gammaproteobacteria</taxon>
        <taxon>Pasteurellales</taxon>
        <taxon>Pasteurellaceae</taxon>
        <taxon>Haemophilus</taxon>
    </lineage>
</organism>
<accession>A5UH19</accession>